<reference key="1">
    <citation type="journal article" date="1986" name="J. Biol. Chem.">
        <title>Isolation of a rat parvalbumin gene and full length cDNA.</title>
        <authorList>
            <person name="Epstein P."/>
            <person name="Means A.R."/>
            <person name="Berchtold M.W."/>
        </authorList>
    </citation>
    <scope>NUCLEOTIDE SEQUENCE [MRNA]</scope>
</reference>
<reference key="2">
    <citation type="journal article" date="1987" name="J. Biol. Chem.">
        <title>Structural organization and chromosomal assignment of the parvalbumin gene.</title>
        <authorList>
            <person name="Berchtold M.W."/>
            <person name="Epstein P."/>
            <person name="Beaudet A.L."/>
            <person name="Payne M.E."/>
            <person name="Heizmann C.W."/>
            <person name="Means A.R."/>
        </authorList>
    </citation>
    <scope>NUCLEOTIDE SEQUENCE [GENOMIC DNA]</scope>
</reference>
<reference key="3">
    <citation type="journal article" date="2004" name="Genome Res.">
        <title>The status, quality, and expansion of the NIH full-length cDNA project: the Mammalian Gene Collection (MGC).</title>
        <authorList>
            <consortium name="The MGC Project Team"/>
        </authorList>
    </citation>
    <scope>NUCLEOTIDE SEQUENCE [LARGE SCALE MRNA]</scope>
    <source>
        <tissue>Brain</tissue>
    </source>
</reference>
<reference key="4">
    <citation type="journal article" date="1982" name="Eur. J. Biochem.">
        <title>Primary structure of parvalbumin from rat skeletal muscle.</title>
        <authorList>
            <person name="Berchtold M.W."/>
            <person name="Heizmann C.W."/>
            <person name="Wilson K.J."/>
        </authorList>
    </citation>
    <scope>PROTEIN SEQUENCE OF 2-110</scope>
    <scope>ACETYLATION AT SER-2</scope>
</reference>
<reference key="5">
    <citation type="submission" date="2007-04" db="UniProtKB">
        <authorList>
            <person name="Lubec G."/>
            <person name="Diao W."/>
        </authorList>
    </citation>
    <scope>PROTEIN SEQUENCE OF 15-29; 47-69 AND 98-110</scope>
    <scope>IDENTIFICATION BY MASS SPECTROMETRY</scope>
    <source>
        <strain>Sprague-Dawley</strain>
        <tissue>Hippocampus</tissue>
    </source>
</reference>
<reference key="6">
    <citation type="journal article" date="1985" name="Proc. Natl. Acad. Sci. U.S.A.">
        <title>The Ca2+-binding protein parvalbumin: molecular cloning and developmental regulation of mRNA abundance.</title>
        <authorList>
            <person name="Berchtold M.W."/>
            <person name="Means A.R."/>
        </authorList>
    </citation>
    <scope>NUCLEOTIDE SEQUENCE [MRNA] OF 35-55 AND 84-92</scope>
</reference>
<reference key="7">
    <citation type="journal article" date="1986" name="Biochemistry">
        <title>1H NMR spectroscopic studies of calcium-binding proteins. 3. Solution conformations of rat apo-alpha-parvalbumin and metal-bound rat alpha-parvalbumin.</title>
        <authorList>
            <person name="Williams T.C."/>
            <person name="Corson D.C."/>
            <person name="Oikawa K."/>
            <person name="McCubbin W.D."/>
            <person name="Kay C.M."/>
            <person name="Sykes B.D."/>
        </authorList>
    </citation>
    <scope>CALCIUM-BINDING</scope>
</reference>
<reference key="8">
    <citation type="journal article" date="1999" name="Anal. Biochem.">
        <title>Electrospray ionization mass spectrometry: analysis of the Ca2+-binding properties of human recombinant alpha-parvalbumin and nine mutant proteins.</title>
        <authorList>
            <person name="Troxler H."/>
            <person name="Kuster T."/>
            <person name="Rhyner J.A."/>
            <person name="Gehrig P."/>
            <person name="Heizmann C.W."/>
        </authorList>
    </citation>
    <scope>ACETYLATION AT SER-2</scope>
    <scope>MASS SPECTROMETRY</scope>
    <source>
        <tissue>Skeletal muscle</tissue>
    </source>
</reference>
<reference key="9">
    <citation type="submission" date="2007-02" db="UniProtKB">
        <authorList>
            <person name="Lubec G."/>
            <person name="Chen W.-Q."/>
        </authorList>
    </citation>
    <scope>ACETYLATION AT SER-2</scope>
    <scope>IDENTIFICATION BY MASS SPECTROMETRY</scope>
</reference>
<reference key="10">
    <citation type="journal article" date="2012" name="Nat. Commun.">
        <title>Quantitative maps of protein phosphorylation sites across 14 different rat organs and tissues.</title>
        <authorList>
            <person name="Lundby A."/>
            <person name="Secher A."/>
            <person name="Lage K."/>
            <person name="Nordsborg N.B."/>
            <person name="Dmytriyev A."/>
            <person name="Lundby C."/>
            <person name="Olsen J.V."/>
        </authorList>
    </citation>
    <scope>PHOSPHORYLATION [LARGE SCALE ANALYSIS] AT SER-2; SER-8; SER-24 AND SER-66</scope>
    <scope>IDENTIFICATION BY MASS SPECTROMETRY [LARGE SCALE ANALYSIS]</scope>
</reference>
<reference evidence="21" key="11">
    <citation type="journal article" date="1994" name="J. Mol. Biol.">
        <title>Refined crystal structure of rat parvalbumin, a mammalian alpha-lineage parvalbumin, at 2.0-A resolution.</title>
        <authorList>
            <person name="McPhalen C.A."/>
            <person name="Sielecki A.R."/>
            <person name="Santarsiero B.D."/>
            <person name="James M.N.G."/>
        </authorList>
    </citation>
    <scope>X-RAY CRYSTALLOGRAPHY (2.0 ANGSTROMS) OF 2-110 IN COMPLEX WITH CA(2+)</scope>
</reference>
<reference evidence="20" key="12">
    <citation type="journal article" date="2001" name="Proteins">
        <title>Structure of rat parvalbumin with deleted AB domain: implications for the evolution of EF hand calcium-binding proteins and possible physiological relevance.</title>
        <authorList>
            <person name="Thepaut M."/>
            <person name="Strub M.P."/>
            <person name="Cave A."/>
            <person name="Baneres J.L."/>
            <person name="Berchtold M.W."/>
            <person name="Dumas C."/>
            <person name="Padilla A."/>
        </authorList>
    </citation>
    <scope>X-RAY CRYSTALLOGRAPHY (1.44 ANGSTROMS) OF 38-110 IN COMPLEX WITH CA(2+)</scope>
    <scope>DOMAIN</scope>
    <scope>MUTAGENESIS OF 1-MET--LYS-37</scope>
</reference>
<reference evidence="23" key="13">
    <citation type="journal article" date="2004" name="Biochemistry">
        <title>Crystal structure of a high-affinity variant of rat alpha-parvalbumin.</title>
        <authorList>
            <person name="Lee Y.H."/>
            <person name="Tanner J.J."/>
            <person name="Larson J.D."/>
            <person name="Henzl M.T."/>
        </authorList>
    </citation>
    <scope>X-RAY CRYSTALLOGRAPHY (2.00 ANGSTROMS) OF 2-110 OF MUTANT ASP-56/ASP-60 IN COMPLEX WITH CA(2+)</scope>
    <scope>MUTAGENESIS OF SER-56 AND GLU-60</scope>
</reference>
<reference evidence="22" key="14">
    <citation type="journal article" date="2004" name="Protein Sci.">
        <title>Crystal structure of rat alpha-parvalbumin at 1.05 Angstrom resolution.</title>
        <authorList>
            <person name="Bottoms C.A."/>
            <person name="Schuermann J.P."/>
            <person name="Agah S."/>
            <person name="Henzl M.T."/>
            <person name="Tanner J.J."/>
        </authorList>
    </citation>
    <scope>X-RAY CRYSTALLOGRAPHY (1.05 ANGSTROMS) OF 2-110 IN COMPLEX WITH CA(2+)</scope>
</reference>
<reference evidence="24" key="15">
    <citation type="journal article" date="2005" name="Biochemistry">
        <title>Crystal structure of the D94S/G98E variant of rat alpha-parvalbumin. An explanation for the reduced divalent ion affinity.</title>
        <authorList>
            <person name="Tanner J.J."/>
            <person name="Agah S."/>
            <person name="Lee Y.H."/>
            <person name="Henzl M.T."/>
        </authorList>
    </citation>
    <scope>X-RAY CRYSTALLOGRAPHY (1.80 ANGSTROMS) OF 2-110 OF MUTANT SER-95/GLU-99 IN COMPLEX WITH CA(2+)</scope>
    <scope>MUTAGENESIS OF ASP-95 AND GLY-99</scope>
</reference>
<reference evidence="25" key="16">
    <citation type="journal article" date="2008" name="Protein Sci.">
        <title>Solution structure of Ca2+-free rat alpha-parvalbumin.</title>
        <authorList>
            <person name="Henzl M.T."/>
            <person name="Tanner J.J."/>
        </authorList>
    </citation>
    <scope>STRUCTURE BY NMR OF 2-110</scope>
</reference>
<reference evidence="26" key="17">
    <citation type="journal article" date="2009" name="Acta Crystallogr. D">
        <title>Removing the invariant salt bridge of parvalbumin increases flexibility in the AB-loop structure.</title>
        <authorList>
            <person name="Hoh F."/>
            <person name="Cave A."/>
            <person name="Strub M.P."/>
            <person name="Baneres J.L."/>
            <person name="Padilla A."/>
        </authorList>
    </citation>
    <scope>X-RAY CRYSTALLOGRAPHY (2.00 ANGSTROMS) OF 2-110 OF MUTANT ALA-76 IN COMPLEX WITH CA(2+)</scope>
    <scope>MUTAGENESIS OF ARG-76</scope>
</reference>
<protein>
    <recommendedName>
        <fullName>Parvalbumin alpha</fullName>
    </recommendedName>
    <alternativeName>
        <fullName evidence="12 13 14 15 16 17 18">Alpha-parvalbumin</fullName>
        <shortName evidence="12 13 14 15 16">Alpha-PV</shortName>
    </alternativeName>
</protein>
<dbReference type="EMBL" id="M12725">
    <property type="protein sequence ID" value="AAA41799.1"/>
    <property type="molecule type" value="mRNA"/>
</dbReference>
<dbReference type="EMBL" id="M15457">
    <property type="protein sequence ID" value="AAA41800.1"/>
    <property type="molecule type" value="Genomic_DNA"/>
</dbReference>
<dbReference type="EMBL" id="M15453">
    <property type="protein sequence ID" value="AAA41800.1"/>
    <property type="status" value="JOINED"/>
    <property type="molecule type" value="Genomic_DNA"/>
</dbReference>
<dbReference type="EMBL" id="M15454">
    <property type="protein sequence ID" value="AAA41800.1"/>
    <property type="status" value="JOINED"/>
    <property type="molecule type" value="Genomic_DNA"/>
</dbReference>
<dbReference type="EMBL" id="M15455">
    <property type="protein sequence ID" value="AAA41800.1"/>
    <property type="status" value="JOINED"/>
    <property type="molecule type" value="Genomic_DNA"/>
</dbReference>
<dbReference type="EMBL" id="BC126090">
    <property type="protein sequence ID" value="AAI26091.1"/>
    <property type="molecule type" value="mRNA"/>
</dbReference>
<dbReference type="EMBL" id="M10764">
    <property type="protein sequence ID" value="AAA41797.1"/>
    <property type="molecule type" value="mRNA"/>
</dbReference>
<dbReference type="EMBL" id="M10765">
    <property type="protein sequence ID" value="AAA41798.1"/>
    <property type="molecule type" value="mRNA"/>
</dbReference>
<dbReference type="PIR" id="A29308">
    <property type="entry name" value="PVRTA"/>
</dbReference>
<dbReference type="RefSeq" id="NP_071944.1">
    <property type="nucleotide sequence ID" value="NM_022499.2"/>
</dbReference>
<dbReference type="RefSeq" id="XP_006241991.1">
    <property type="nucleotide sequence ID" value="XM_006241929.5"/>
</dbReference>
<dbReference type="PDB" id="1G33">
    <property type="method" value="X-ray"/>
    <property type="resolution" value="1.44 A"/>
    <property type="chains" value="A=38-110"/>
</dbReference>
<dbReference type="PDB" id="1RTP">
    <property type="method" value="X-ray"/>
    <property type="resolution" value="2.00 A"/>
    <property type="chains" value="1/2/3=2-110"/>
</dbReference>
<dbReference type="PDB" id="1RWY">
    <property type="method" value="X-ray"/>
    <property type="resolution" value="1.05 A"/>
    <property type="chains" value="A/B/C=2-110"/>
</dbReference>
<dbReference type="PDB" id="1S3P">
    <property type="method" value="X-ray"/>
    <property type="resolution" value="2.00 A"/>
    <property type="chains" value="A=2-110"/>
</dbReference>
<dbReference type="PDB" id="1XVJ">
    <property type="method" value="X-ray"/>
    <property type="resolution" value="1.80 A"/>
    <property type="chains" value="A/B=2-110"/>
</dbReference>
<dbReference type="PDB" id="2JWW">
    <property type="method" value="NMR"/>
    <property type="chains" value="A=2-110"/>
</dbReference>
<dbReference type="PDB" id="3F45">
    <property type="method" value="X-ray"/>
    <property type="resolution" value="2.00 A"/>
    <property type="chains" value="A=2-110"/>
</dbReference>
<dbReference type="PDBsum" id="1G33"/>
<dbReference type="PDBsum" id="1RTP"/>
<dbReference type="PDBsum" id="1RWY"/>
<dbReference type="PDBsum" id="1S3P"/>
<dbReference type="PDBsum" id="1XVJ"/>
<dbReference type="PDBsum" id="2JWW"/>
<dbReference type="PDBsum" id="3F45"/>
<dbReference type="BMRB" id="P02625"/>
<dbReference type="SMR" id="P02625"/>
<dbReference type="FunCoup" id="P02625">
    <property type="interactions" value="43"/>
</dbReference>
<dbReference type="STRING" id="10116.ENSRNOP00000058825"/>
<dbReference type="iPTMnet" id="P02625"/>
<dbReference type="PhosphoSitePlus" id="P02625"/>
<dbReference type="PaxDb" id="10116-ENSRNOP00000058825"/>
<dbReference type="ABCD" id="P02625">
    <property type="antibodies" value="4 sequenced antibodies"/>
</dbReference>
<dbReference type="GeneID" id="25269"/>
<dbReference type="KEGG" id="rno:25269"/>
<dbReference type="UCSC" id="RGD:3457">
    <property type="organism name" value="rat"/>
</dbReference>
<dbReference type="AGR" id="RGD:3457"/>
<dbReference type="CTD" id="5816"/>
<dbReference type="RGD" id="3457">
    <property type="gene designation" value="Pvalb"/>
</dbReference>
<dbReference type="VEuPathDB" id="HostDB:ENSRNOG00000006471"/>
<dbReference type="eggNOG" id="KOG0027">
    <property type="taxonomic scope" value="Eukaryota"/>
</dbReference>
<dbReference type="HOGENOM" id="CLU_157356_0_0_1"/>
<dbReference type="InParanoid" id="P02625"/>
<dbReference type="PhylomeDB" id="P02625"/>
<dbReference type="TreeFam" id="TF332342"/>
<dbReference type="EvolutionaryTrace" id="P02625"/>
<dbReference type="PRO" id="PR:P02625"/>
<dbReference type="Proteomes" id="UP000002494">
    <property type="component" value="Chromosome 7"/>
</dbReference>
<dbReference type="Bgee" id="ENSRNOG00000006471">
    <property type="expression patterns" value="Expressed in quadriceps femoris and 17 other cell types or tissues"/>
</dbReference>
<dbReference type="GO" id="GO:0030424">
    <property type="term" value="C:axon"/>
    <property type="evidence" value="ECO:0000266"/>
    <property type="project" value="RGD"/>
</dbReference>
<dbReference type="GO" id="GO:0032437">
    <property type="term" value="C:cuticular plate"/>
    <property type="evidence" value="ECO:0000314"/>
    <property type="project" value="RGD"/>
</dbReference>
<dbReference type="GO" id="GO:0005737">
    <property type="term" value="C:cytoplasm"/>
    <property type="evidence" value="ECO:0000266"/>
    <property type="project" value="RGD"/>
</dbReference>
<dbReference type="GO" id="GO:0043025">
    <property type="term" value="C:neuronal cell body"/>
    <property type="evidence" value="ECO:0000314"/>
    <property type="project" value="RGD"/>
</dbReference>
<dbReference type="GO" id="GO:0032991">
    <property type="term" value="C:protein-containing complex"/>
    <property type="evidence" value="ECO:0000314"/>
    <property type="project" value="RGD"/>
</dbReference>
<dbReference type="GO" id="GO:0032420">
    <property type="term" value="C:stereocilium"/>
    <property type="evidence" value="ECO:0000314"/>
    <property type="project" value="RGD"/>
</dbReference>
<dbReference type="GO" id="GO:0043195">
    <property type="term" value="C:terminal bouton"/>
    <property type="evidence" value="ECO:0007005"/>
    <property type="project" value="ParkinsonsUK-UCL"/>
</dbReference>
<dbReference type="GO" id="GO:0005509">
    <property type="term" value="F:calcium ion binding"/>
    <property type="evidence" value="ECO:0000314"/>
    <property type="project" value="RGD"/>
</dbReference>
<dbReference type="GO" id="GO:0042802">
    <property type="term" value="F:identical protein binding"/>
    <property type="evidence" value="ECO:0000353"/>
    <property type="project" value="RGD"/>
</dbReference>
<dbReference type="GO" id="GO:0044877">
    <property type="term" value="F:protein-containing complex binding"/>
    <property type="evidence" value="ECO:0000314"/>
    <property type="project" value="RGD"/>
</dbReference>
<dbReference type="GO" id="GO:0090102">
    <property type="term" value="P:cochlea development"/>
    <property type="evidence" value="ECO:0000270"/>
    <property type="project" value="RGD"/>
</dbReference>
<dbReference type="GO" id="GO:0098976">
    <property type="term" value="P:excitatory chemical synaptic transmission"/>
    <property type="evidence" value="ECO:0000266"/>
    <property type="project" value="RGD"/>
</dbReference>
<dbReference type="GO" id="GO:0010467">
    <property type="term" value="P:gene expression"/>
    <property type="evidence" value="ECO:0000266"/>
    <property type="project" value="RGD"/>
</dbReference>
<dbReference type="GO" id="GO:0098977">
    <property type="term" value="P:inhibitory chemical synaptic transmission"/>
    <property type="evidence" value="ECO:0000266"/>
    <property type="project" value="RGD"/>
</dbReference>
<dbReference type="CDD" id="cd16254">
    <property type="entry name" value="EFh_parvalbumin_alpha"/>
    <property type="match status" value="1"/>
</dbReference>
<dbReference type="FunFam" id="1.10.238.10:FF:000060">
    <property type="entry name" value="Parvalbumin, thymic"/>
    <property type="match status" value="1"/>
</dbReference>
<dbReference type="Gene3D" id="1.10.238.10">
    <property type="entry name" value="EF-hand"/>
    <property type="match status" value="1"/>
</dbReference>
<dbReference type="InterPro" id="IPR011992">
    <property type="entry name" value="EF-hand-dom_pair"/>
</dbReference>
<dbReference type="InterPro" id="IPR018247">
    <property type="entry name" value="EF_Hand_1_Ca_BS"/>
</dbReference>
<dbReference type="InterPro" id="IPR002048">
    <property type="entry name" value="EF_hand_dom"/>
</dbReference>
<dbReference type="InterPro" id="IPR008080">
    <property type="entry name" value="Parvalbumin"/>
</dbReference>
<dbReference type="PANTHER" id="PTHR11653">
    <property type="entry name" value="PARVALBUMIN ALPHA"/>
    <property type="match status" value="1"/>
</dbReference>
<dbReference type="PANTHER" id="PTHR11653:SF2">
    <property type="entry name" value="PARVALBUMIN ALPHA"/>
    <property type="match status" value="1"/>
</dbReference>
<dbReference type="Pfam" id="PF13499">
    <property type="entry name" value="EF-hand_7"/>
    <property type="match status" value="1"/>
</dbReference>
<dbReference type="PRINTS" id="PR01697">
    <property type="entry name" value="PARVALBUMIN"/>
</dbReference>
<dbReference type="SMART" id="SM00054">
    <property type="entry name" value="EFh"/>
    <property type="match status" value="2"/>
</dbReference>
<dbReference type="SUPFAM" id="SSF47473">
    <property type="entry name" value="EF-hand"/>
    <property type="match status" value="1"/>
</dbReference>
<dbReference type="PROSITE" id="PS00018">
    <property type="entry name" value="EF_HAND_1"/>
    <property type="match status" value="2"/>
</dbReference>
<dbReference type="PROSITE" id="PS50222">
    <property type="entry name" value="EF_HAND_2"/>
    <property type="match status" value="2"/>
</dbReference>
<proteinExistence type="evidence at protein level"/>
<gene>
    <name type="primary">Pvalb</name>
    <name type="synonym">Pva</name>
</gene>
<evidence type="ECO:0000250" key="1">
    <source>
        <dbReference type="UniProtKB" id="P02624"/>
    </source>
</evidence>
<evidence type="ECO:0000255" key="2">
    <source>
        <dbReference type="PROSITE-ProRule" id="PRU00448"/>
    </source>
</evidence>
<evidence type="ECO:0000269" key="3">
    <source>
    </source>
</evidence>
<evidence type="ECO:0000269" key="4">
    <source>
    </source>
</evidence>
<evidence type="ECO:0000269" key="5">
    <source>
    </source>
</evidence>
<evidence type="ECO:0000269" key="6">
    <source>
    </source>
</evidence>
<evidence type="ECO:0000269" key="7">
    <source>
    </source>
</evidence>
<evidence type="ECO:0000269" key="8">
    <source>
    </source>
</evidence>
<evidence type="ECO:0000269" key="9">
    <source>
    </source>
</evidence>
<evidence type="ECO:0000269" key="10">
    <source>
    </source>
</evidence>
<evidence type="ECO:0000269" key="11">
    <source ref="9"/>
</evidence>
<evidence type="ECO:0000303" key="12">
    <source>
    </source>
</evidence>
<evidence type="ECO:0000303" key="13">
    <source>
    </source>
</evidence>
<evidence type="ECO:0000303" key="14">
    <source>
    </source>
</evidence>
<evidence type="ECO:0000303" key="15">
    <source>
    </source>
</evidence>
<evidence type="ECO:0000303" key="16">
    <source>
    </source>
</evidence>
<evidence type="ECO:0000303" key="17">
    <source>
    </source>
</evidence>
<evidence type="ECO:0000303" key="18">
    <source>
    </source>
</evidence>
<evidence type="ECO:0000305" key="19"/>
<evidence type="ECO:0007744" key="20">
    <source>
        <dbReference type="PDB" id="1G33"/>
    </source>
</evidence>
<evidence type="ECO:0007744" key="21">
    <source>
        <dbReference type="PDB" id="1RTP"/>
    </source>
</evidence>
<evidence type="ECO:0007744" key="22">
    <source>
        <dbReference type="PDB" id="1RWY"/>
    </source>
</evidence>
<evidence type="ECO:0007744" key="23">
    <source>
        <dbReference type="PDB" id="1S3P"/>
    </source>
</evidence>
<evidence type="ECO:0007744" key="24">
    <source>
        <dbReference type="PDB" id="1XVJ"/>
    </source>
</evidence>
<evidence type="ECO:0007744" key="25">
    <source>
        <dbReference type="PDB" id="2JWW"/>
    </source>
</evidence>
<evidence type="ECO:0007744" key="26">
    <source>
        <dbReference type="PDB" id="3F45"/>
    </source>
</evidence>
<evidence type="ECO:0007744" key="27">
    <source>
    </source>
</evidence>
<evidence type="ECO:0007829" key="28">
    <source>
        <dbReference type="PDB" id="1RWY"/>
    </source>
</evidence>
<evidence type="ECO:0007829" key="29">
    <source>
        <dbReference type="PDB" id="2JWW"/>
    </source>
</evidence>
<name>PRVA_RAT</name>
<sequence length="110" mass="11926">MSMTDLLSAEDIKKAIGAFTAADSFDHKKFFQMVGLKKKSADDVKKVFHILDKDKSGFIEEDELGSILKGFSSDARDLSAKETKTLMAAGDKDGDGKIGVEEFSTLVAES</sequence>
<feature type="initiator methionine" description="Removed" evidence="3 9 11">
    <location>
        <position position="1"/>
    </location>
</feature>
<feature type="chain" id="PRO_0000073592" description="Parvalbumin alpha">
    <location>
        <begin position="2"/>
        <end position="110"/>
    </location>
</feature>
<feature type="domain" description="EF-hand 1" evidence="2">
    <location>
        <begin position="39"/>
        <end position="74"/>
    </location>
</feature>
<feature type="domain" description="EF-hand 2" evidence="2">
    <location>
        <begin position="78"/>
        <end position="110"/>
    </location>
</feature>
<feature type="binding site" evidence="2 4 5 6 7 8 10 20 21 22 23 24 26">
    <location>
        <position position="52"/>
    </location>
    <ligand>
        <name>Ca(2+)</name>
        <dbReference type="ChEBI" id="CHEBI:29108"/>
        <label>1</label>
    </ligand>
</feature>
<feature type="binding site" evidence="2 4 5 6 7 8 10 20 21 22 23 24 26">
    <location>
        <position position="54"/>
    </location>
    <ligand>
        <name>Ca(2+)</name>
        <dbReference type="ChEBI" id="CHEBI:29108"/>
        <label>1</label>
    </ligand>
</feature>
<feature type="binding site" evidence="2 4 5 7 8 10 20 21 22 24 26">
    <location>
        <position position="56"/>
    </location>
    <ligand>
        <name>Ca(2+)</name>
        <dbReference type="ChEBI" id="CHEBI:29108"/>
        <label>1</label>
    </ligand>
</feature>
<feature type="binding site" evidence="4 5 6 7 8 10 20 21 22 23 24 26">
    <location>
        <position position="58"/>
    </location>
    <ligand>
        <name>Ca(2+)</name>
        <dbReference type="ChEBI" id="CHEBI:29108"/>
        <label>1</label>
    </ligand>
</feature>
<feature type="binding site" evidence="4 5 7 8 10 20 21 22 24 26">
    <location>
        <position position="60"/>
    </location>
    <ligand>
        <name>Ca(2+)</name>
        <dbReference type="ChEBI" id="CHEBI:29108"/>
        <label>1</label>
    </ligand>
</feature>
<feature type="binding site" evidence="2 4 5 6 7 8 10 20 21 22 23 24 26">
    <location>
        <position position="63"/>
    </location>
    <ligand>
        <name>Ca(2+)</name>
        <dbReference type="ChEBI" id="CHEBI:29108"/>
        <label>1</label>
    </ligand>
</feature>
<feature type="binding site" evidence="2 4 5 6 7 8 10 20 21 22 23 24 26">
    <location>
        <position position="91"/>
    </location>
    <ligand>
        <name>Ca(2+)</name>
        <dbReference type="ChEBI" id="CHEBI:29108"/>
        <label>2</label>
    </ligand>
</feature>
<feature type="binding site" evidence="2 4 5 6 7 8 10 20 21 22 23 24 26">
    <location>
        <position position="93"/>
    </location>
    <ligand>
        <name>Ca(2+)</name>
        <dbReference type="ChEBI" id="CHEBI:29108"/>
        <label>2</label>
    </ligand>
</feature>
<feature type="binding site" evidence="2 4 5 6 8 10 20 21 22 23 26">
    <location>
        <position position="95"/>
    </location>
    <ligand>
        <name>Ca(2+)</name>
        <dbReference type="ChEBI" id="CHEBI:29108"/>
        <label>2</label>
    </ligand>
</feature>
<feature type="binding site" evidence="2 4 5 6 7 8 10 20 21 22 23 24 26">
    <location>
        <position position="97"/>
    </location>
    <ligand>
        <name>Ca(2+)</name>
        <dbReference type="ChEBI" id="CHEBI:29108"/>
        <label>2</label>
    </ligand>
</feature>
<feature type="binding site" evidence="2 4 5 6 7 8 10 20 21 22 23 24 26">
    <location>
        <position position="102"/>
    </location>
    <ligand>
        <name>Ca(2+)</name>
        <dbReference type="ChEBI" id="CHEBI:29108"/>
        <label>2</label>
    </ligand>
</feature>
<feature type="modified residue" description="N-acetylserine" evidence="3 9 11">
    <location>
        <position position="2"/>
    </location>
</feature>
<feature type="modified residue" description="Phosphoserine" evidence="27">
    <location>
        <position position="2"/>
    </location>
</feature>
<feature type="modified residue" description="Phosphoserine" evidence="27">
    <location>
        <position position="8"/>
    </location>
</feature>
<feature type="modified residue" description="Phosphoserine" evidence="27">
    <location>
        <position position="24"/>
    </location>
</feature>
<feature type="modified residue" description="Phosphoserine" evidence="27">
    <location>
        <position position="66"/>
    </location>
</feature>
<feature type="mutagenesis site" description="Deletion of both A and B helices results in loss of stable apo form, in lower Ca(+) ion-binding affinity compared to wild-type, and in inability to bind Mg(2+)." evidence="4">
    <location>
        <begin position="1"/>
        <end position="37"/>
    </location>
</feature>
<feature type="mutagenesis site" description="Increased Ca(2+)-binding affinity in the EF-hand 1 domain probably due to the orientation of mutant D-60 side chain, which is predicted to stabilize helix D; when associated with D-60. Behaves as wild-type with identical Na(+)-binding stoichiometry and increased Ca(2+) and Mg(2+) ion-binding affinity in K(+)-containing solution; when associated with D-60." evidence="6">
    <original>S</original>
    <variation>D</variation>
    <location>
        <position position="56"/>
    </location>
</feature>
<feature type="mutagenesis site" description="Increased Ca(2+)-binding affinity in the EF-hand 1 domain probably due to the orientation of mutant D-60 side chain, which is predicted to stabilize helix D; when associated with D-56. Behaves as wild-type with identical Na(+)-binding stoichiometry and increased Ca(2+) and Mg(2+) ion-binding affinity in K(+)-containing solution; when associated with D-56." evidence="6">
    <original>E</original>
    <variation>D</variation>
    <location>
        <position position="60"/>
    </location>
</feature>
<feature type="mutagenesis site" description="Loss of salt bridge formation with E-81. No effect in the overall structure of the protein. However, more solvent-exposed AB loop, which consists of two antiparallel helices A and B, and higher flexibility of the AB loop compared to the wild-type structure. Lower thermal stability of the calcium-loaded form of the protein than that of the wild-type, but melting temperature (Tm) value still remains quite high. Unfolded apo form at room temperature. Weaker calcium- and, to a lesser extent, magnesium-binding affinities compared to the wild-type." evidence="8">
    <original>R</original>
    <variation>A</variation>
    <location>
        <position position="76"/>
    </location>
</feature>
<feature type="mutagenesis site" description="Reduced Ca(2+)-binding affinity in the EF-hand 2 domain due to a substantial enthalpic penalty, the source of which may be steric interference between F-58 and C alpha atom of mutant E-99; when associated with E-99. No effect on the Ca(2+) or Mg(2+) ion-binding properties in either Na(+)- or K(+)-containing buffers indicating that the reduced affinity for divalent ions is not a result of heightened monovalent ion competition; when associated with E-99." evidence="7">
    <original>D</original>
    <variation>S</variation>
    <location>
        <position position="95"/>
    </location>
</feature>
<feature type="mutagenesis site" description="Reduced Ca(2+)-binding affinity in the EF-hand 2 domain due to a substantial enthalpic penalty, the source of which may be steric interference between F-58 and C alpha atom of mutant E-99; when associated with S-95. No effect on the Ca(2+) or Mg(2+) ion-binding properties in either Na(+)- or K(+)-containing buffers indicating that the reduced affinity for divalent ions is not a result of heightened monovalent ion competition; when associated with S-95." evidence="7">
    <original>G</original>
    <variation>E</variation>
    <location>
        <position position="99"/>
    </location>
</feature>
<feature type="helix" evidence="28">
    <location>
        <begin position="3"/>
        <end position="6"/>
    </location>
</feature>
<feature type="helix" evidence="28">
    <location>
        <begin position="9"/>
        <end position="17"/>
    </location>
</feature>
<feature type="helix" evidence="29">
    <location>
        <begin position="22"/>
        <end position="25"/>
    </location>
</feature>
<feature type="helix" evidence="28">
    <location>
        <begin position="27"/>
        <end position="33"/>
    </location>
</feature>
<feature type="helix" evidence="28">
    <location>
        <begin position="36"/>
        <end position="38"/>
    </location>
</feature>
<feature type="helix" evidence="28">
    <location>
        <begin position="41"/>
        <end position="51"/>
    </location>
</feature>
<feature type="strand" evidence="29">
    <location>
        <begin position="52"/>
        <end position="55"/>
    </location>
</feature>
<feature type="strand" evidence="28">
    <location>
        <begin position="56"/>
        <end position="59"/>
    </location>
</feature>
<feature type="helix" evidence="28">
    <location>
        <begin position="61"/>
        <end position="65"/>
    </location>
</feature>
<feature type="helix" evidence="28">
    <location>
        <begin position="67"/>
        <end position="71"/>
    </location>
</feature>
<feature type="helix" evidence="28">
    <location>
        <begin position="80"/>
        <end position="90"/>
    </location>
</feature>
<feature type="turn" evidence="29">
    <location>
        <begin position="91"/>
        <end position="94"/>
    </location>
</feature>
<feature type="strand" evidence="28">
    <location>
        <begin position="95"/>
        <end position="99"/>
    </location>
</feature>
<feature type="helix" evidence="28">
    <location>
        <begin position="100"/>
        <end position="108"/>
    </location>
</feature>
<comment type="function">
    <text evidence="1 4 5 6 7 8 10">In muscle, parvalbumin is thought to be involved in relaxation after contraction (By similarity). It binds two calcium ions (PubMed:19622856, PubMed:16101280, PubMed:15169955, PubMed:15287728, PubMed:11562941, PubMed:8289291).</text>
</comment>
<comment type="domain">
    <text evidence="4">AB domain, comprising of helices A and B, is involved in structural stabilization, protecting the hydrophobic core of the protein. It is required for high-affinity binding of Ca(2+) and for Mg(2+)-binding.</text>
</comment>
<comment type="mass spectrometry" mass="11836.88" error="1.57" method="Electrospray" evidence="3"/>
<comment type="similarity">
    <text evidence="19">Belongs to the parvalbumin family.</text>
</comment>
<keyword id="KW-0002">3D-structure</keyword>
<keyword id="KW-0007">Acetylation</keyword>
<keyword id="KW-0106">Calcium</keyword>
<keyword id="KW-0903">Direct protein sequencing</keyword>
<keyword id="KW-0479">Metal-binding</keyword>
<keyword id="KW-0514">Muscle protein</keyword>
<keyword id="KW-0597">Phosphoprotein</keyword>
<keyword id="KW-1185">Reference proteome</keyword>
<keyword id="KW-0677">Repeat</keyword>
<accession>P02625</accession>
<accession>A0JN21</accession>
<organism>
    <name type="scientific">Rattus norvegicus</name>
    <name type="common">Rat</name>
    <dbReference type="NCBI Taxonomy" id="10116"/>
    <lineage>
        <taxon>Eukaryota</taxon>
        <taxon>Metazoa</taxon>
        <taxon>Chordata</taxon>
        <taxon>Craniata</taxon>
        <taxon>Vertebrata</taxon>
        <taxon>Euteleostomi</taxon>
        <taxon>Mammalia</taxon>
        <taxon>Eutheria</taxon>
        <taxon>Euarchontoglires</taxon>
        <taxon>Glires</taxon>
        <taxon>Rodentia</taxon>
        <taxon>Myomorpha</taxon>
        <taxon>Muroidea</taxon>
        <taxon>Muridae</taxon>
        <taxon>Murinae</taxon>
        <taxon>Rattus</taxon>
    </lineage>
</organism>